<dbReference type="EMBL" id="CR860423">
    <property type="protein sequence ID" value="CAH92548.1"/>
    <property type="molecule type" value="mRNA"/>
</dbReference>
<dbReference type="RefSeq" id="NP_001127562.1">
    <property type="nucleotide sequence ID" value="NM_001134090.2"/>
</dbReference>
<dbReference type="SMR" id="Q5R6R2"/>
<dbReference type="STRING" id="9601.ENSPPYP00000015157"/>
<dbReference type="GeneID" id="100174640"/>
<dbReference type="KEGG" id="pon:100174640"/>
<dbReference type="CTD" id="29114"/>
<dbReference type="eggNOG" id="KOG2046">
    <property type="taxonomic scope" value="Eukaryota"/>
</dbReference>
<dbReference type="InParanoid" id="Q5R6R2"/>
<dbReference type="OrthoDB" id="21595at2759"/>
<dbReference type="Proteomes" id="UP000001595">
    <property type="component" value="Unplaced"/>
</dbReference>
<dbReference type="GO" id="GO:0015629">
    <property type="term" value="C:actin cytoskeleton"/>
    <property type="evidence" value="ECO:0007669"/>
    <property type="project" value="TreeGrafter"/>
</dbReference>
<dbReference type="GO" id="GO:0051015">
    <property type="term" value="F:actin filament binding"/>
    <property type="evidence" value="ECO:0007669"/>
    <property type="project" value="TreeGrafter"/>
</dbReference>
<dbReference type="GO" id="GO:0007015">
    <property type="term" value="P:actin filament organization"/>
    <property type="evidence" value="ECO:0007669"/>
    <property type="project" value="TreeGrafter"/>
</dbReference>
<dbReference type="CDD" id="cd21281">
    <property type="entry name" value="CH_TAGLN3"/>
    <property type="match status" value="1"/>
</dbReference>
<dbReference type="FunFam" id="1.10.418.10:FF:000039">
    <property type="entry name" value="Transgelin"/>
    <property type="match status" value="1"/>
</dbReference>
<dbReference type="Gene3D" id="1.10.418.10">
    <property type="entry name" value="Calponin-like domain"/>
    <property type="match status" value="1"/>
</dbReference>
<dbReference type="InterPro" id="IPR050606">
    <property type="entry name" value="Calponin-like"/>
</dbReference>
<dbReference type="InterPro" id="IPR000557">
    <property type="entry name" value="Calponin_repeat"/>
</dbReference>
<dbReference type="InterPro" id="IPR001715">
    <property type="entry name" value="CH_dom"/>
</dbReference>
<dbReference type="InterPro" id="IPR036872">
    <property type="entry name" value="CH_dom_sf"/>
</dbReference>
<dbReference type="InterPro" id="IPR003096">
    <property type="entry name" value="SM22_calponin"/>
</dbReference>
<dbReference type="PANTHER" id="PTHR47385">
    <property type="entry name" value="CALPONIN"/>
    <property type="match status" value="1"/>
</dbReference>
<dbReference type="PANTHER" id="PTHR47385:SF10">
    <property type="entry name" value="TRANSGELIN-3"/>
    <property type="match status" value="1"/>
</dbReference>
<dbReference type="Pfam" id="PF00402">
    <property type="entry name" value="Calponin"/>
    <property type="match status" value="1"/>
</dbReference>
<dbReference type="Pfam" id="PF00307">
    <property type="entry name" value="CH"/>
    <property type="match status" value="1"/>
</dbReference>
<dbReference type="PRINTS" id="PR00888">
    <property type="entry name" value="SM22CALPONIN"/>
</dbReference>
<dbReference type="PRINTS" id="PR00890">
    <property type="entry name" value="TRANSGELIN"/>
</dbReference>
<dbReference type="SMART" id="SM00033">
    <property type="entry name" value="CH"/>
    <property type="match status" value="1"/>
</dbReference>
<dbReference type="SUPFAM" id="SSF47576">
    <property type="entry name" value="Calponin-homology domain, CH-domain"/>
    <property type="match status" value="1"/>
</dbReference>
<dbReference type="PROSITE" id="PS01052">
    <property type="entry name" value="CALPONIN_1"/>
    <property type="match status" value="1"/>
</dbReference>
<dbReference type="PROSITE" id="PS51122">
    <property type="entry name" value="CALPONIN_2"/>
    <property type="match status" value="1"/>
</dbReference>
<dbReference type="PROSITE" id="PS50021">
    <property type="entry name" value="CH"/>
    <property type="match status" value="1"/>
</dbReference>
<comment type="similarity">
    <text evidence="4">Belongs to the calponin family.</text>
</comment>
<accession>Q5R6R2</accession>
<evidence type="ECO:0000250" key="1">
    <source>
        <dbReference type="UniProtKB" id="P37805"/>
    </source>
</evidence>
<evidence type="ECO:0000255" key="2">
    <source>
        <dbReference type="PROSITE-ProRule" id="PRU00044"/>
    </source>
</evidence>
<evidence type="ECO:0000256" key="3">
    <source>
        <dbReference type="SAM" id="MobiDB-lite"/>
    </source>
</evidence>
<evidence type="ECO:0000305" key="4"/>
<reference key="1">
    <citation type="submission" date="2004-11" db="EMBL/GenBank/DDBJ databases">
        <authorList>
            <consortium name="The German cDNA consortium"/>
        </authorList>
    </citation>
    <scope>NUCLEOTIDE SEQUENCE [LARGE SCALE MRNA]</scope>
    <source>
        <tissue>Brain cortex</tissue>
    </source>
</reference>
<sequence length="199" mass="22447">MANRGPSYGSSREVQEKIEQKYDADLENKLVDWIILQCAEDIEHPPPGRAHFQKWLMDGTVLCKLINSLYPPGQEPIPKISESKMAFKQMEQISQFLKAAETYGVRTTDIFQTVDLWEGKDMAAVQRTLMALGSVAVTKDDGCYRGEPSWFHRKAQQNRRGFSEEQLRQGQNVIGLQMGSNKGASQAGMTGYGMPRQIM</sequence>
<proteinExistence type="evidence at transcript level"/>
<feature type="chain" id="PRO_0000272686" description="Transgelin-3">
    <location>
        <begin position="1"/>
        <end position="199"/>
    </location>
</feature>
<feature type="domain" description="Calponin-homology (CH)" evidence="2">
    <location>
        <begin position="24"/>
        <end position="136"/>
    </location>
</feature>
<feature type="repeat" description="Calponin-like">
    <location>
        <begin position="174"/>
        <end position="199"/>
    </location>
</feature>
<feature type="region of interest" description="Disordered" evidence="3">
    <location>
        <begin position="176"/>
        <end position="199"/>
    </location>
</feature>
<feature type="compositionally biased region" description="Polar residues" evidence="3">
    <location>
        <begin position="176"/>
        <end position="188"/>
    </location>
</feature>
<feature type="modified residue" description="Phosphoserine" evidence="1">
    <location>
        <position position="163"/>
    </location>
</feature>
<keyword id="KW-0597">Phosphoprotein</keyword>
<keyword id="KW-1185">Reference proteome</keyword>
<organism>
    <name type="scientific">Pongo abelii</name>
    <name type="common">Sumatran orangutan</name>
    <name type="synonym">Pongo pygmaeus abelii</name>
    <dbReference type="NCBI Taxonomy" id="9601"/>
    <lineage>
        <taxon>Eukaryota</taxon>
        <taxon>Metazoa</taxon>
        <taxon>Chordata</taxon>
        <taxon>Craniata</taxon>
        <taxon>Vertebrata</taxon>
        <taxon>Euteleostomi</taxon>
        <taxon>Mammalia</taxon>
        <taxon>Eutheria</taxon>
        <taxon>Euarchontoglires</taxon>
        <taxon>Primates</taxon>
        <taxon>Haplorrhini</taxon>
        <taxon>Catarrhini</taxon>
        <taxon>Hominidae</taxon>
        <taxon>Pongo</taxon>
    </lineage>
</organism>
<protein>
    <recommendedName>
        <fullName>Transgelin-3</fullName>
    </recommendedName>
</protein>
<name>TAGL3_PONAB</name>
<gene>
    <name type="primary">TAGLN3</name>
</gene>